<proteinExistence type="inferred from homology"/>
<comment type="function">
    <text evidence="1">Catalyzes the conversion of dethiobiotin (DTB) to biotin by the insertion of a sulfur atom into dethiobiotin via a radical-based mechanism.</text>
</comment>
<comment type="catalytic activity">
    <reaction evidence="1">
        <text>(4R,5S)-dethiobiotin + (sulfur carrier)-SH + 2 reduced [2Fe-2S]-[ferredoxin] + 2 S-adenosyl-L-methionine = (sulfur carrier)-H + biotin + 2 5'-deoxyadenosine + 2 L-methionine + 2 oxidized [2Fe-2S]-[ferredoxin]</text>
        <dbReference type="Rhea" id="RHEA:22060"/>
        <dbReference type="Rhea" id="RHEA-COMP:10000"/>
        <dbReference type="Rhea" id="RHEA-COMP:10001"/>
        <dbReference type="Rhea" id="RHEA-COMP:14737"/>
        <dbReference type="Rhea" id="RHEA-COMP:14739"/>
        <dbReference type="ChEBI" id="CHEBI:17319"/>
        <dbReference type="ChEBI" id="CHEBI:29917"/>
        <dbReference type="ChEBI" id="CHEBI:33737"/>
        <dbReference type="ChEBI" id="CHEBI:33738"/>
        <dbReference type="ChEBI" id="CHEBI:57586"/>
        <dbReference type="ChEBI" id="CHEBI:57844"/>
        <dbReference type="ChEBI" id="CHEBI:59789"/>
        <dbReference type="ChEBI" id="CHEBI:64428"/>
        <dbReference type="ChEBI" id="CHEBI:149473"/>
        <dbReference type="EC" id="2.8.1.6"/>
    </reaction>
</comment>
<comment type="cofactor">
    <cofactor evidence="1">
        <name>[4Fe-4S] cluster</name>
        <dbReference type="ChEBI" id="CHEBI:49883"/>
    </cofactor>
    <text evidence="1">Binds 1 [4Fe-4S] cluster. The cluster is coordinated with 3 cysteines and an exchangeable S-adenosyl-L-methionine.</text>
</comment>
<comment type="cofactor">
    <cofactor evidence="1">
        <name>[2Fe-2S] cluster</name>
        <dbReference type="ChEBI" id="CHEBI:190135"/>
    </cofactor>
    <text evidence="1">Binds 1 [2Fe-2S] cluster. The cluster is coordinated with 3 cysteines and 1 arginine.</text>
</comment>
<comment type="pathway">
    <text evidence="1">Cofactor biosynthesis; biotin biosynthesis; biotin from 7,8-diaminononanoate: step 2/2.</text>
</comment>
<comment type="subunit">
    <text evidence="1">Homodimer.</text>
</comment>
<comment type="similarity">
    <text evidence="1">Belongs to the radical SAM superfamily. Biotin synthase family.</text>
</comment>
<gene>
    <name evidence="1" type="primary">bioB</name>
    <name type="ordered locus">RPC_3236</name>
</gene>
<dbReference type="EC" id="2.8.1.6" evidence="1"/>
<dbReference type="EMBL" id="CP000301">
    <property type="protein sequence ID" value="ABD88778.1"/>
    <property type="molecule type" value="Genomic_DNA"/>
</dbReference>
<dbReference type="SMR" id="Q212A8"/>
<dbReference type="STRING" id="316056.RPC_3236"/>
<dbReference type="KEGG" id="rpc:RPC_3236"/>
<dbReference type="eggNOG" id="COG0502">
    <property type="taxonomic scope" value="Bacteria"/>
</dbReference>
<dbReference type="HOGENOM" id="CLU_033172_1_0_5"/>
<dbReference type="OrthoDB" id="9786826at2"/>
<dbReference type="UniPathway" id="UPA00078">
    <property type="reaction ID" value="UER00162"/>
</dbReference>
<dbReference type="GO" id="GO:0051537">
    <property type="term" value="F:2 iron, 2 sulfur cluster binding"/>
    <property type="evidence" value="ECO:0007669"/>
    <property type="project" value="UniProtKB-KW"/>
</dbReference>
<dbReference type="GO" id="GO:0051539">
    <property type="term" value="F:4 iron, 4 sulfur cluster binding"/>
    <property type="evidence" value="ECO:0007669"/>
    <property type="project" value="UniProtKB-KW"/>
</dbReference>
<dbReference type="GO" id="GO:0004076">
    <property type="term" value="F:biotin synthase activity"/>
    <property type="evidence" value="ECO:0007669"/>
    <property type="project" value="UniProtKB-UniRule"/>
</dbReference>
<dbReference type="GO" id="GO:0005506">
    <property type="term" value="F:iron ion binding"/>
    <property type="evidence" value="ECO:0007669"/>
    <property type="project" value="UniProtKB-UniRule"/>
</dbReference>
<dbReference type="GO" id="GO:0009102">
    <property type="term" value="P:biotin biosynthetic process"/>
    <property type="evidence" value="ECO:0007669"/>
    <property type="project" value="UniProtKB-UniRule"/>
</dbReference>
<dbReference type="CDD" id="cd01335">
    <property type="entry name" value="Radical_SAM"/>
    <property type="match status" value="1"/>
</dbReference>
<dbReference type="Gene3D" id="3.20.20.70">
    <property type="entry name" value="Aldolase class I"/>
    <property type="match status" value="1"/>
</dbReference>
<dbReference type="HAMAP" id="MF_01694">
    <property type="entry name" value="BioB"/>
    <property type="match status" value="1"/>
</dbReference>
<dbReference type="InterPro" id="IPR013785">
    <property type="entry name" value="Aldolase_TIM"/>
</dbReference>
<dbReference type="InterPro" id="IPR010722">
    <property type="entry name" value="BATS_dom"/>
</dbReference>
<dbReference type="InterPro" id="IPR002684">
    <property type="entry name" value="Biotin_synth/BioAB"/>
</dbReference>
<dbReference type="InterPro" id="IPR024177">
    <property type="entry name" value="Biotin_synthase"/>
</dbReference>
<dbReference type="InterPro" id="IPR006638">
    <property type="entry name" value="Elp3/MiaA/NifB-like_rSAM"/>
</dbReference>
<dbReference type="InterPro" id="IPR007197">
    <property type="entry name" value="rSAM"/>
</dbReference>
<dbReference type="NCBIfam" id="TIGR00433">
    <property type="entry name" value="bioB"/>
    <property type="match status" value="1"/>
</dbReference>
<dbReference type="PANTHER" id="PTHR22976">
    <property type="entry name" value="BIOTIN SYNTHASE"/>
    <property type="match status" value="1"/>
</dbReference>
<dbReference type="PANTHER" id="PTHR22976:SF2">
    <property type="entry name" value="BIOTIN SYNTHASE, MITOCHONDRIAL"/>
    <property type="match status" value="1"/>
</dbReference>
<dbReference type="Pfam" id="PF06968">
    <property type="entry name" value="BATS"/>
    <property type="match status" value="1"/>
</dbReference>
<dbReference type="Pfam" id="PF04055">
    <property type="entry name" value="Radical_SAM"/>
    <property type="match status" value="1"/>
</dbReference>
<dbReference type="PIRSF" id="PIRSF001619">
    <property type="entry name" value="Biotin_synth"/>
    <property type="match status" value="1"/>
</dbReference>
<dbReference type="SFLD" id="SFLDG01060">
    <property type="entry name" value="BATS_domain_containing"/>
    <property type="match status" value="1"/>
</dbReference>
<dbReference type="SFLD" id="SFLDF00272">
    <property type="entry name" value="biotin_synthase"/>
    <property type="match status" value="1"/>
</dbReference>
<dbReference type="SMART" id="SM00876">
    <property type="entry name" value="BATS"/>
    <property type="match status" value="1"/>
</dbReference>
<dbReference type="SMART" id="SM00729">
    <property type="entry name" value="Elp3"/>
    <property type="match status" value="1"/>
</dbReference>
<dbReference type="SUPFAM" id="SSF102114">
    <property type="entry name" value="Radical SAM enzymes"/>
    <property type="match status" value="1"/>
</dbReference>
<dbReference type="PROSITE" id="PS51918">
    <property type="entry name" value="RADICAL_SAM"/>
    <property type="match status" value="1"/>
</dbReference>
<reference key="1">
    <citation type="submission" date="2006-03" db="EMBL/GenBank/DDBJ databases">
        <title>Complete sequence of Rhodopseudomonas palustris BisB18.</title>
        <authorList>
            <consortium name="US DOE Joint Genome Institute"/>
            <person name="Copeland A."/>
            <person name="Lucas S."/>
            <person name="Lapidus A."/>
            <person name="Barry K."/>
            <person name="Detter J.C."/>
            <person name="Glavina del Rio T."/>
            <person name="Hammon N."/>
            <person name="Israni S."/>
            <person name="Dalin E."/>
            <person name="Tice H."/>
            <person name="Pitluck S."/>
            <person name="Chain P."/>
            <person name="Malfatti S."/>
            <person name="Shin M."/>
            <person name="Vergez L."/>
            <person name="Schmutz J."/>
            <person name="Larimer F."/>
            <person name="Land M."/>
            <person name="Hauser L."/>
            <person name="Pelletier D.A."/>
            <person name="Kyrpides N."/>
            <person name="Anderson I."/>
            <person name="Oda Y."/>
            <person name="Harwood C.S."/>
            <person name="Richardson P."/>
        </authorList>
    </citation>
    <scope>NUCLEOTIDE SEQUENCE [LARGE SCALE GENOMIC DNA]</scope>
    <source>
        <strain>BisB18</strain>
    </source>
</reference>
<keyword id="KW-0001">2Fe-2S</keyword>
<keyword id="KW-0004">4Fe-4S</keyword>
<keyword id="KW-0093">Biotin biosynthesis</keyword>
<keyword id="KW-0408">Iron</keyword>
<keyword id="KW-0411">Iron-sulfur</keyword>
<keyword id="KW-0479">Metal-binding</keyword>
<keyword id="KW-0949">S-adenosyl-L-methionine</keyword>
<keyword id="KW-0808">Transferase</keyword>
<protein>
    <recommendedName>
        <fullName evidence="1">Biotin synthase</fullName>
        <ecNumber evidence="1">2.8.1.6</ecNumber>
    </recommendedName>
</protein>
<evidence type="ECO:0000255" key="1">
    <source>
        <dbReference type="HAMAP-Rule" id="MF_01694"/>
    </source>
</evidence>
<evidence type="ECO:0000255" key="2">
    <source>
        <dbReference type="PROSITE-ProRule" id="PRU01266"/>
    </source>
</evidence>
<evidence type="ECO:0000256" key="3">
    <source>
        <dbReference type="SAM" id="MobiDB-lite"/>
    </source>
</evidence>
<name>BIOB_RHOPB</name>
<feature type="chain" id="PRO_0000381583" description="Biotin synthase">
    <location>
        <begin position="1"/>
        <end position="356"/>
    </location>
</feature>
<feature type="domain" description="Radical SAM core" evidence="2">
    <location>
        <begin position="51"/>
        <end position="270"/>
    </location>
</feature>
<feature type="region of interest" description="Disordered" evidence="3">
    <location>
        <begin position="310"/>
        <end position="356"/>
    </location>
</feature>
<feature type="compositionally biased region" description="Basic and acidic residues" evidence="3">
    <location>
        <begin position="312"/>
        <end position="350"/>
    </location>
</feature>
<feature type="binding site" evidence="1">
    <location>
        <position position="66"/>
    </location>
    <ligand>
        <name>[4Fe-4S] cluster</name>
        <dbReference type="ChEBI" id="CHEBI:49883"/>
        <note>4Fe-4S-S-AdoMet</note>
    </ligand>
</feature>
<feature type="binding site" evidence="1">
    <location>
        <position position="70"/>
    </location>
    <ligand>
        <name>[4Fe-4S] cluster</name>
        <dbReference type="ChEBI" id="CHEBI:49883"/>
        <note>4Fe-4S-S-AdoMet</note>
    </ligand>
</feature>
<feature type="binding site" evidence="1">
    <location>
        <position position="73"/>
    </location>
    <ligand>
        <name>[4Fe-4S] cluster</name>
        <dbReference type="ChEBI" id="CHEBI:49883"/>
        <note>4Fe-4S-S-AdoMet</note>
    </ligand>
</feature>
<feature type="binding site" evidence="1">
    <location>
        <position position="110"/>
    </location>
    <ligand>
        <name>[2Fe-2S] cluster</name>
        <dbReference type="ChEBI" id="CHEBI:190135"/>
    </ligand>
</feature>
<feature type="binding site" evidence="1">
    <location>
        <position position="141"/>
    </location>
    <ligand>
        <name>[2Fe-2S] cluster</name>
        <dbReference type="ChEBI" id="CHEBI:190135"/>
    </ligand>
</feature>
<feature type="binding site" evidence="1">
    <location>
        <position position="201"/>
    </location>
    <ligand>
        <name>[2Fe-2S] cluster</name>
        <dbReference type="ChEBI" id="CHEBI:190135"/>
    </ligand>
</feature>
<feature type="binding site" evidence="1">
    <location>
        <position position="274"/>
    </location>
    <ligand>
        <name>[2Fe-2S] cluster</name>
        <dbReference type="ChEBI" id="CHEBI:190135"/>
    </ligand>
</feature>
<sequence>MNTIDLPSLAQATPTIRHDWTREEAAAIYYAPFMDLMFRAATIHRQSFDPNKVQCNQLLNVKTGGCAEDCGYCGQSAHHHTDLPASKLMAPADVIESAKAAKAGGATRYCMGAAWRSPKDRDMAPVIEMVKGVKALGMEACVTLGMLSDDQAKQLADAGLDYYNHNLDTSEEFYPSVVKTRTYGDRLNTLHKVQDAGIKVCCGGILGLGEKPTDRVEMLRTLANLAKHPESVPINLLIPIEGTPISLTATPVDPIAFVRTIALARIMMPLSDVRLAAGRTAMSDEMQTLCFLAGANSIFIGDTLLTTPNPGDNKDRSLFDRLGLEPRDDHGVHEHSSHSHTHDQGHDHGPHGHSHG</sequence>
<organism>
    <name type="scientific">Rhodopseudomonas palustris (strain BisB18)</name>
    <dbReference type="NCBI Taxonomy" id="316056"/>
    <lineage>
        <taxon>Bacteria</taxon>
        <taxon>Pseudomonadati</taxon>
        <taxon>Pseudomonadota</taxon>
        <taxon>Alphaproteobacteria</taxon>
        <taxon>Hyphomicrobiales</taxon>
        <taxon>Nitrobacteraceae</taxon>
        <taxon>Rhodopseudomonas</taxon>
    </lineage>
</organism>
<accession>Q212A8</accession>